<accession>Q9NP50</accession>
<accession>D3DUV8</accession>
<accession>Q9BSZ8</accession>
<reference key="1">
    <citation type="journal article" date="2004" name="Oncogene">
        <title>Suppression subtractive hybridization and expression profiling identifies a unique set of genes overexpressed in non-small-cell lung cancer.</title>
        <authorList>
            <person name="Petroziello J."/>
            <person name="Yamane A."/>
            <person name="Westendorf L."/>
            <person name="Thompson M."/>
            <person name="McDonagh C."/>
            <person name="Cerveny C."/>
            <person name="Law C.-L."/>
            <person name="Wahl A."/>
            <person name="Carter P."/>
        </authorList>
    </citation>
    <scope>NUCLEOTIDE SEQUENCE [MRNA] (ISOFORM 1)</scope>
    <scope>INDUCTION</scope>
</reference>
<reference key="2">
    <citation type="submission" date="1998-08" db="EMBL/GenBank/DDBJ databases">
        <title>Cloning and expression of a new human cDNA homology to murine Tera mRNA.</title>
        <authorList>
            <person name="Zhou Y."/>
            <person name="Yu L."/>
            <person name="Dai F.Y."/>
            <person name="Li N.G."/>
            <person name="Zheng L.H."/>
            <person name="Zhap S.Y."/>
        </authorList>
    </citation>
    <scope>NUCLEOTIDE SEQUENCE [MRNA] (ISOFORM 1)</scope>
</reference>
<reference key="3">
    <citation type="journal article" date="2000" name="Genome Res.">
        <title>Cloning and functional analysis of cDNAs with open reading frames for 300 previously undefined genes expressed in CD34+ hematopoietic stem/progenitor cells.</title>
        <authorList>
            <person name="Zhang Q.-H."/>
            <person name="Ye M."/>
            <person name="Wu X.-Y."/>
            <person name="Ren S.-X."/>
            <person name="Zhao M."/>
            <person name="Zhao C.-J."/>
            <person name="Fu G."/>
            <person name="Shen Y."/>
            <person name="Fan H.-Y."/>
            <person name="Lu G."/>
            <person name="Zhong M."/>
            <person name="Xu X.-R."/>
            <person name="Han Z.-G."/>
            <person name="Zhang J.-W."/>
            <person name="Tao J."/>
            <person name="Huang Q.-H."/>
            <person name="Zhou J."/>
            <person name="Hu G.-X."/>
            <person name="Gu J."/>
            <person name="Chen S.-J."/>
            <person name="Chen Z."/>
        </authorList>
    </citation>
    <scope>NUCLEOTIDE SEQUENCE [LARGE SCALE MRNA] (ISOFORM 1)</scope>
    <source>
        <tissue>Bone marrow</tissue>
    </source>
</reference>
<reference key="4">
    <citation type="journal article" date="2004" name="Nat. Genet.">
        <title>Complete sequencing and characterization of 21,243 full-length human cDNAs.</title>
        <authorList>
            <person name="Ota T."/>
            <person name="Suzuki Y."/>
            <person name="Nishikawa T."/>
            <person name="Otsuki T."/>
            <person name="Sugiyama T."/>
            <person name="Irie R."/>
            <person name="Wakamatsu A."/>
            <person name="Hayashi K."/>
            <person name="Sato H."/>
            <person name="Nagai K."/>
            <person name="Kimura K."/>
            <person name="Makita H."/>
            <person name="Sekine M."/>
            <person name="Obayashi M."/>
            <person name="Nishi T."/>
            <person name="Shibahara T."/>
            <person name="Tanaka T."/>
            <person name="Ishii S."/>
            <person name="Yamamoto J."/>
            <person name="Saito K."/>
            <person name="Kawai Y."/>
            <person name="Isono Y."/>
            <person name="Nakamura Y."/>
            <person name="Nagahari K."/>
            <person name="Murakami K."/>
            <person name="Yasuda T."/>
            <person name="Iwayanagi T."/>
            <person name="Wagatsuma M."/>
            <person name="Shiratori A."/>
            <person name="Sudo H."/>
            <person name="Hosoiri T."/>
            <person name="Kaku Y."/>
            <person name="Kodaira H."/>
            <person name="Kondo H."/>
            <person name="Sugawara M."/>
            <person name="Takahashi M."/>
            <person name="Kanda K."/>
            <person name="Yokoi T."/>
            <person name="Furuya T."/>
            <person name="Kikkawa E."/>
            <person name="Omura Y."/>
            <person name="Abe K."/>
            <person name="Kamihara K."/>
            <person name="Katsuta N."/>
            <person name="Sato K."/>
            <person name="Tanikawa M."/>
            <person name="Yamazaki M."/>
            <person name="Ninomiya K."/>
            <person name="Ishibashi T."/>
            <person name="Yamashita H."/>
            <person name="Murakawa K."/>
            <person name="Fujimori K."/>
            <person name="Tanai H."/>
            <person name="Kimata M."/>
            <person name="Watanabe M."/>
            <person name="Hiraoka S."/>
            <person name="Chiba Y."/>
            <person name="Ishida S."/>
            <person name="Ono Y."/>
            <person name="Takiguchi S."/>
            <person name="Watanabe S."/>
            <person name="Yosida M."/>
            <person name="Hotuta T."/>
            <person name="Kusano J."/>
            <person name="Kanehori K."/>
            <person name="Takahashi-Fujii A."/>
            <person name="Hara H."/>
            <person name="Tanase T.-O."/>
            <person name="Nomura Y."/>
            <person name="Togiya S."/>
            <person name="Komai F."/>
            <person name="Hara R."/>
            <person name="Takeuchi K."/>
            <person name="Arita M."/>
            <person name="Imose N."/>
            <person name="Musashino K."/>
            <person name="Yuuki H."/>
            <person name="Oshima A."/>
            <person name="Sasaki N."/>
            <person name="Aotsuka S."/>
            <person name="Yoshikawa Y."/>
            <person name="Matsunawa H."/>
            <person name="Ichihara T."/>
            <person name="Shiohata N."/>
            <person name="Sano S."/>
            <person name="Moriya S."/>
            <person name="Momiyama H."/>
            <person name="Satoh N."/>
            <person name="Takami S."/>
            <person name="Terashima Y."/>
            <person name="Suzuki O."/>
            <person name="Nakagawa S."/>
            <person name="Senoh A."/>
            <person name="Mizoguchi H."/>
            <person name="Goto Y."/>
            <person name="Shimizu F."/>
            <person name="Wakebe H."/>
            <person name="Hishigaki H."/>
            <person name="Watanabe T."/>
            <person name="Sugiyama A."/>
            <person name="Takemoto M."/>
            <person name="Kawakami B."/>
            <person name="Yamazaki M."/>
            <person name="Watanabe K."/>
            <person name="Kumagai A."/>
            <person name="Itakura S."/>
            <person name="Fukuzumi Y."/>
            <person name="Fujimori Y."/>
            <person name="Komiyama M."/>
            <person name="Tashiro H."/>
            <person name="Tanigami A."/>
            <person name="Fujiwara T."/>
            <person name="Ono T."/>
            <person name="Yamada K."/>
            <person name="Fujii Y."/>
            <person name="Ozaki K."/>
            <person name="Hirao M."/>
            <person name="Ohmori Y."/>
            <person name="Kawabata A."/>
            <person name="Hikiji T."/>
            <person name="Kobatake N."/>
            <person name="Inagaki H."/>
            <person name="Ikema Y."/>
            <person name="Okamoto S."/>
            <person name="Okitani R."/>
            <person name="Kawakami T."/>
            <person name="Noguchi S."/>
            <person name="Itoh T."/>
            <person name="Shigeta K."/>
            <person name="Senba T."/>
            <person name="Matsumura K."/>
            <person name="Nakajima Y."/>
            <person name="Mizuno T."/>
            <person name="Morinaga M."/>
            <person name="Sasaki M."/>
            <person name="Togashi T."/>
            <person name="Oyama M."/>
            <person name="Hata H."/>
            <person name="Watanabe M."/>
            <person name="Komatsu T."/>
            <person name="Mizushima-Sugano J."/>
            <person name="Satoh T."/>
            <person name="Shirai Y."/>
            <person name="Takahashi Y."/>
            <person name="Nakagawa K."/>
            <person name="Okumura K."/>
            <person name="Nagase T."/>
            <person name="Nomura N."/>
            <person name="Kikuchi H."/>
            <person name="Masuho Y."/>
            <person name="Yamashita R."/>
            <person name="Nakai K."/>
            <person name="Yada T."/>
            <person name="Nakamura Y."/>
            <person name="Ohara O."/>
            <person name="Isogai T."/>
            <person name="Sugano S."/>
        </authorList>
    </citation>
    <scope>NUCLEOTIDE SEQUENCE [LARGE SCALE MRNA] (ISOFORM 1)</scope>
    <source>
        <tissue>Hepatoma</tissue>
    </source>
</reference>
<reference key="5">
    <citation type="journal article" date="2006" name="Nature">
        <title>The finished DNA sequence of human chromosome 12.</title>
        <authorList>
            <person name="Scherer S.E."/>
            <person name="Muzny D.M."/>
            <person name="Buhay C.J."/>
            <person name="Chen R."/>
            <person name="Cree A."/>
            <person name="Ding Y."/>
            <person name="Dugan-Rocha S."/>
            <person name="Gill R."/>
            <person name="Gunaratne P."/>
            <person name="Harris R.A."/>
            <person name="Hawes A.C."/>
            <person name="Hernandez J."/>
            <person name="Hodgson A.V."/>
            <person name="Hume J."/>
            <person name="Jackson A."/>
            <person name="Khan Z.M."/>
            <person name="Kovar-Smith C."/>
            <person name="Lewis L.R."/>
            <person name="Lozado R.J."/>
            <person name="Metzker M.L."/>
            <person name="Milosavljevic A."/>
            <person name="Miner G.R."/>
            <person name="Montgomery K.T."/>
            <person name="Morgan M.B."/>
            <person name="Nazareth L.V."/>
            <person name="Scott G."/>
            <person name="Sodergren E."/>
            <person name="Song X.-Z."/>
            <person name="Steffen D."/>
            <person name="Lovering R.C."/>
            <person name="Wheeler D.A."/>
            <person name="Worley K.C."/>
            <person name="Yuan Y."/>
            <person name="Zhang Z."/>
            <person name="Adams C.Q."/>
            <person name="Ansari-Lari M.A."/>
            <person name="Ayele M."/>
            <person name="Brown M.J."/>
            <person name="Chen G."/>
            <person name="Chen Z."/>
            <person name="Clerc-Blankenburg K.P."/>
            <person name="Davis C."/>
            <person name="Delgado O."/>
            <person name="Dinh H.H."/>
            <person name="Draper H."/>
            <person name="Gonzalez-Garay M.L."/>
            <person name="Havlak P."/>
            <person name="Jackson L.R."/>
            <person name="Jacob L.S."/>
            <person name="Kelly S.H."/>
            <person name="Li L."/>
            <person name="Li Z."/>
            <person name="Liu J."/>
            <person name="Liu W."/>
            <person name="Lu J."/>
            <person name="Maheshwari M."/>
            <person name="Nguyen B.-V."/>
            <person name="Okwuonu G.O."/>
            <person name="Pasternak S."/>
            <person name="Perez L.M."/>
            <person name="Plopper F.J.H."/>
            <person name="Santibanez J."/>
            <person name="Shen H."/>
            <person name="Tabor P.E."/>
            <person name="Verduzco D."/>
            <person name="Waldron L."/>
            <person name="Wang Q."/>
            <person name="Williams G.A."/>
            <person name="Zhang J."/>
            <person name="Zhou J."/>
            <person name="Allen C.C."/>
            <person name="Amin A.G."/>
            <person name="Anyalebechi V."/>
            <person name="Bailey M."/>
            <person name="Barbaria J.A."/>
            <person name="Bimage K.E."/>
            <person name="Bryant N.P."/>
            <person name="Burch P.E."/>
            <person name="Burkett C.E."/>
            <person name="Burrell K.L."/>
            <person name="Calderon E."/>
            <person name="Cardenas V."/>
            <person name="Carter K."/>
            <person name="Casias K."/>
            <person name="Cavazos I."/>
            <person name="Cavazos S.R."/>
            <person name="Ceasar H."/>
            <person name="Chacko J."/>
            <person name="Chan S.N."/>
            <person name="Chavez D."/>
            <person name="Christopoulos C."/>
            <person name="Chu J."/>
            <person name="Cockrell R."/>
            <person name="Cox C.D."/>
            <person name="Dang M."/>
            <person name="Dathorne S.R."/>
            <person name="David R."/>
            <person name="Davis C.M."/>
            <person name="Davy-Carroll L."/>
            <person name="Deshazo D.R."/>
            <person name="Donlin J.E."/>
            <person name="D'Souza L."/>
            <person name="Eaves K.A."/>
            <person name="Egan A."/>
            <person name="Emery-Cohen A.J."/>
            <person name="Escotto M."/>
            <person name="Flagg N."/>
            <person name="Forbes L.D."/>
            <person name="Gabisi A.M."/>
            <person name="Garza M."/>
            <person name="Hamilton C."/>
            <person name="Henderson N."/>
            <person name="Hernandez O."/>
            <person name="Hines S."/>
            <person name="Hogues M.E."/>
            <person name="Huang M."/>
            <person name="Idlebird D.G."/>
            <person name="Johnson R."/>
            <person name="Jolivet A."/>
            <person name="Jones S."/>
            <person name="Kagan R."/>
            <person name="King L.M."/>
            <person name="Leal B."/>
            <person name="Lebow H."/>
            <person name="Lee S."/>
            <person name="LeVan J.M."/>
            <person name="Lewis L.C."/>
            <person name="London P."/>
            <person name="Lorensuhewa L.M."/>
            <person name="Loulseged H."/>
            <person name="Lovett D.A."/>
            <person name="Lucier A."/>
            <person name="Lucier R.L."/>
            <person name="Ma J."/>
            <person name="Madu R.C."/>
            <person name="Mapua P."/>
            <person name="Martindale A.D."/>
            <person name="Martinez E."/>
            <person name="Massey E."/>
            <person name="Mawhiney S."/>
            <person name="Meador M.G."/>
            <person name="Mendez S."/>
            <person name="Mercado C."/>
            <person name="Mercado I.C."/>
            <person name="Merritt C.E."/>
            <person name="Miner Z.L."/>
            <person name="Minja E."/>
            <person name="Mitchell T."/>
            <person name="Mohabbat F."/>
            <person name="Mohabbat K."/>
            <person name="Montgomery B."/>
            <person name="Moore N."/>
            <person name="Morris S."/>
            <person name="Munidasa M."/>
            <person name="Ngo R.N."/>
            <person name="Nguyen N.B."/>
            <person name="Nickerson E."/>
            <person name="Nwaokelemeh O.O."/>
            <person name="Nwokenkwo S."/>
            <person name="Obregon M."/>
            <person name="Oguh M."/>
            <person name="Oragunye N."/>
            <person name="Oviedo R.J."/>
            <person name="Parish B.J."/>
            <person name="Parker D.N."/>
            <person name="Parrish J."/>
            <person name="Parks K.L."/>
            <person name="Paul H.A."/>
            <person name="Payton B.A."/>
            <person name="Perez A."/>
            <person name="Perrin W."/>
            <person name="Pickens A."/>
            <person name="Primus E.L."/>
            <person name="Pu L.-L."/>
            <person name="Puazo M."/>
            <person name="Quiles M.M."/>
            <person name="Quiroz J.B."/>
            <person name="Rabata D."/>
            <person name="Reeves K."/>
            <person name="Ruiz S.J."/>
            <person name="Shao H."/>
            <person name="Sisson I."/>
            <person name="Sonaike T."/>
            <person name="Sorelle R.P."/>
            <person name="Sutton A.E."/>
            <person name="Svatek A.F."/>
            <person name="Svetz L.A."/>
            <person name="Tamerisa K.S."/>
            <person name="Taylor T.R."/>
            <person name="Teague B."/>
            <person name="Thomas N."/>
            <person name="Thorn R.D."/>
            <person name="Trejos Z.Y."/>
            <person name="Trevino B.K."/>
            <person name="Ukegbu O.N."/>
            <person name="Urban J.B."/>
            <person name="Vasquez L.I."/>
            <person name="Vera V.A."/>
            <person name="Villasana D.M."/>
            <person name="Wang L."/>
            <person name="Ward-Moore S."/>
            <person name="Warren J.T."/>
            <person name="Wei X."/>
            <person name="White F."/>
            <person name="Williamson A.L."/>
            <person name="Wleczyk R."/>
            <person name="Wooden H.S."/>
            <person name="Wooden S.H."/>
            <person name="Yen J."/>
            <person name="Yoon L."/>
            <person name="Yoon V."/>
            <person name="Zorrilla S.E."/>
            <person name="Nelson D."/>
            <person name="Kucherlapati R."/>
            <person name="Weinstock G."/>
            <person name="Gibbs R.A."/>
        </authorList>
    </citation>
    <scope>NUCLEOTIDE SEQUENCE [LARGE SCALE GENOMIC DNA]</scope>
</reference>
<reference key="6">
    <citation type="journal article" date="2007" name="BMC Genomics">
        <title>The full-ORF clone resource of the German cDNA consortium.</title>
        <authorList>
            <person name="Bechtel S."/>
            <person name="Rosenfelder H."/>
            <person name="Duda A."/>
            <person name="Schmidt C.P."/>
            <person name="Ernst U."/>
            <person name="Wellenreuther R."/>
            <person name="Mehrle A."/>
            <person name="Schuster C."/>
            <person name="Bahr A."/>
            <person name="Bloecker H."/>
            <person name="Heubner D."/>
            <person name="Hoerlein A."/>
            <person name="Michel G."/>
            <person name="Wedler H."/>
            <person name="Koehrer K."/>
            <person name="Ottenwaelder B."/>
            <person name="Poustka A."/>
            <person name="Wiemann S."/>
            <person name="Schupp I."/>
        </authorList>
    </citation>
    <scope>NUCLEOTIDE SEQUENCE [LARGE SCALE MRNA] (ISOFORM 1)</scope>
    <source>
        <tissue>Melanoma</tissue>
    </source>
</reference>
<reference key="7">
    <citation type="submission" date="2005-09" db="EMBL/GenBank/DDBJ databases">
        <authorList>
            <person name="Mural R.J."/>
            <person name="Istrail S."/>
            <person name="Sutton G.G."/>
            <person name="Florea L."/>
            <person name="Halpern A.L."/>
            <person name="Mobarry C.M."/>
            <person name="Lippert R."/>
            <person name="Walenz B."/>
            <person name="Shatkay H."/>
            <person name="Dew I."/>
            <person name="Miller J.R."/>
            <person name="Flanigan M.J."/>
            <person name="Edwards N.J."/>
            <person name="Bolanos R."/>
            <person name="Fasulo D."/>
            <person name="Halldorsson B.V."/>
            <person name="Hannenhalli S."/>
            <person name="Turner R."/>
            <person name="Yooseph S."/>
            <person name="Lu F."/>
            <person name="Nusskern D.R."/>
            <person name="Shue B.C."/>
            <person name="Zheng X.H."/>
            <person name="Zhong F."/>
            <person name="Delcher A.L."/>
            <person name="Huson D.H."/>
            <person name="Kravitz S.A."/>
            <person name="Mouchard L."/>
            <person name="Reinert K."/>
            <person name="Remington K.A."/>
            <person name="Clark A.G."/>
            <person name="Waterman M.S."/>
            <person name="Eichler E.E."/>
            <person name="Adams M.D."/>
            <person name="Hunkapiller M.W."/>
            <person name="Myers E.W."/>
            <person name="Venter J.C."/>
        </authorList>
    </citation>
    <scope>NUCLEOTIDE SEQUENCE [LARGE SCALE GENOMIC DNA]</scope>
</reference>
<reference key="8">
    <citation type="journal article" date="2004" name="Genome Res.">
        <title>The status, quality, and expansion of the NIH full-length cDNA project: the Mammalian Gene Collection (MGC).</title>
        <authorList>
            <consortium name="The MGC Project Team"/>
        </authorList>
    </citation>
    <scope>NUCLEOTIDE SEQUENCE [LARGE SCALE MRNA] (ISOFORMS 1 AND 2)</scope>
    <source>
        <tissue>Lung</tissue>
        <tissue>Lymph</tissue>
        <tissue>Placenta</tissue>
    </source>
</reference>
<reference key="9">
    <citation type="journal article" date="2007" name="Science">
        <title>ATM and ATR substrate analysis reveals extensive protein networks responsive to DNA damage.</title>
        <authorList>
            <person name="Matsuoka S."/>
            <person name="Ballif B.A."/>
            <person name="Smogorzewska A."/>
            <person name="McDonald E.R. III"/>
            <person name="Hurov K.E."/>
            <person name="Luo J."/>
            <person name="Bakalarski C.E."/>
            <person name="Zhao Z."/>
            <person name="Solimini N."/>
            <person name="Lerenthal Y."/>
            <person name="Shiloh Y."/>
            <person name="Gygi S.P."/>
            <person name="Elledge S.J."/>
        </authorList>
    </citation>
    <scope>IDENTIFICATION BY MASS SPECTROMETRY [LARGE SCALE ANALYSIS]</scope>
    <source>
        <tissue>Embryonic kidney</tissue>
    </source>
</reference>
<reference key="10">
    <citation type="journal article" date="2012" name="J. Biol. Chem.">
        <title>Family with sequence similarity 60A (FAM60A) protein is a cell cycle-fluctuating regulator of the SIN3-HDAC1 histone deacetylase complex.</title>
        <authorList>
            <person name="Munoz I.M."/>
            <person name="Macartney T."/>
            <person name="Sanchez-Pulido L."/>
            <person name="Ponting C.P."/>
            <person name="Rocha S."/>
            <person name="Rouse J."/>
        </authorList>
    </citation>
    <scope>IDENTIFICATION IN THE SIN3/HDAC COMPLEX</scope>
    <scope>INDUCTION</scope>
    <scope>FUNCTION</scope>
</reference>
<reference key="11">
    <citation type="journal article" date="2012" name="Mol. Cell. Proteomics">
        <title>Human family with sequence similarity 60 member A (FAM60A) protein: a new subunit of the Sin3 deacetylase complex.</title>
        <authorList>
            <person name="Smith K.T."/>
            <person name="Sardiu M.E."/>
            <person name="Martin-Brown S.A."/>
            <person name="Seidel C."/>
            <person name="Mushegian A."/>
            <person name="Egidy R."/>
            <person name="Florens L."/>
            <person name="Washburn M.P."/>
            <person name="Workman J.L."/>
        </authorList>
    </citation>
    <scope>IDENTIFICATION IN THE SIN3/HDAC COMPLEX</scope>
    <scope>IDENTIFICATION BY MASS SPECTROMETRY</scope>
    <scope>FUNCTION</scope>
</reference>
<feature type="chain" id="PRO_0000187086" description="SIN3-HDAC complex-associated factor">
    <location>
        <begin position="1"/>
        <end position="221"/>
    </location>
</feature>
<feature type="region of interest" description="Disordered" evidence="2">
    <location>
        <begin position="112"/>
        <end position="152"/>
    </location>
</feature>
<feature type="region of interest" description="Disordered" evidence="2">
    <location>
        <begin position="201"/>
        <end position="221"/>
    </location>
</feature>
<feature type="compositionally biased region" description="Basic and acidic residues" evidence="2">
    <location>
        <begin position="112"/>
        <end position="121"/>
    </location>
</feature>
<feature type="compositionally biased region" description="Low complexity" evidence="2">
    <location>
        <begin position="124"/>
        <end position="135"/>
    </location>
</feature>
<feature type="compositionally biased region" description="Polar residues" evidence="2">
    <location>
        <begin position="136"/>
        <end position="152"/>
    </location>
</feature>
<feature type="splice variant" id="VSP_014705" description="In isoform 2." evidence="6">
    <location>
        <begin position="1"/>
        <end position="148"/>
    </location>
</feature>
<feature type="sequence variant" id="VAR_049027" description="In dbSNP:rs2304459.">
    <original>R</original>
    <variation>H</variation>
    <location>
        <position position="117"/>
    </location>
</feature>
<sequence length="221" mass="24852">MFGFHKPKMYRSIEGCCICRAKSSSSRFTDSKRYEKDFQSCFGLHETRSGDICNACVLLVKRWKKLPAGSKKNWNHVVDARAGPSLKTTLKPKKVKTLSGNRIKSNQISKLQKEFKRHNSDAHSTTSSASPAQSPCYSNQSDDGSDTEMASGSNRTPVFSFLDLTYWKRQKICCGIIYKGRFGEVLIDTHLFKPCCSNKKAAAEKPEEQGPEPLPISTQEW</sequence>
<gene>
    <name evidence="8" type="primary">SINHCAF</name>
    <name type="synonym">C12orf14</name>
    <name type="synonym">FAM60A</name>
    <name type="ORF">L4</name>
</gene>
<dbReference type="EMBL" id="AY598323">
    <property type="protein sequence ID" value="AAT06734.1"/>
    <property type="molecule type" value="mRNA"/>
</dbReference>
<dbReference type="EMBL" id="AF087885">
    <property type="protein sequence ID" value="AAP97184.1"/>
    <property type="molecule type" value="mRNA"/>
</dbReference>
<dbReference type="EMBL" id="AF212220">
    <property type="protein sequence ID" value="AAF87322.1"/>
    <property type="molecule type" value="mRNA"/>
</dbReference>
<dbReference type="EMBL" id="AK026932">
    <property type="protein sequence ID" value="BAB15592.1"/>
    <property type="molecule type" value="mRNA"/>
</dbReference>
<dbReference type="EMBL" id="AL157432">
    <property type="protein sequence ID" value="CAB75656.1"/>
    <property type="molecule type" value="mRNA"/>
</dbReference>
<dbReference type="EMBL" id="AC024940">
    <property type="status" value="NOT_ANNOTATED_CDS"/>
    <property type="molecule type" value="Genomic_DNA"/>
</dbReference>
<dbReference type="EMBL" id="CH471116">
    <property type="protein sequence ID" value="EAW88561.1"/>
    <property type="molecule type" value="Genomic_DNA"/>
</dbReference>
<dbReference type="EMBL" id="CH471116">
    <property type="protein sequence ID" value="EAW88562.1"/>
    <property type="molecule type" value="Genomic_DNA"/>
</dbReference>
<dbReference type="EMBL" id="CH471116">
    <property type="protein sequence ID" value="EAW88564.1"/>
    <property type="molecule type" value="Genomic_DNA"/>
</dbReference>
<dbReference type="EMBL" id="CH471116">
    <property type="protein sequence ID" value="EAW88566.1"/>
    <property type="molecule type" value="Genomic_DNA"/>
</dbReference>
<dbReference type="EMBL" id="CH471116">
    <property type="protein sequence ID" value="EAW88567.1"/>
    <property type="molecule type" value="Genomic_DNA"/>
</dbReference>
<dbReference type="EMBL" id="BC000024">
    <property type="protein sequence ID" value="AAH00024.1"/>
    <property type="molecule type" value="mRNA"/>
</dbReference>
<dbReference type="EMBL" id="BC004462">
    <property type="protein sequence ID" value="AAH04462.1"/>
    <property type="molecule type" value="mRNA"/>
</dbReference>
<dbReference type="EMBL" id="BC071966">
    <property type="protein sequence ID" value="AAH71966.1"/>
    <property type="molecule type" value="mRNA"/>
</dbReference>
<dbReference type="CCDS" id="CCDS8723.1">
    <molecule id="Q9NP50-1"/>
</dbReference>
<dbReference type="PIR" id="T46918">
    <property type="entry name" value="T46918"/>
</dbReference>
<dbReference type="RefSeq" id="NP_001129283.1">
    <molecule id="Q9NP50-1"/>
    <property type="nucleotide sequence ID" value="NM_001135811.2"/>
</dbReference>
<dbReference type="RefSeq" id="NP_001129284.1">
    <molecule id="Q9NP50-1"/>
    <property type="nucleotide sequence ID" value="NM_001135812.2"/>
</dbReference>
<dbReference type="RefSeq" id="NP_067061.1">
    <molecule id="Q9NP50-1"/>
    <property type="nucleotide sequence ID" value="NM_021238.3"/>
</dbReference>
<dbReference type="RefSeq" id="XP_011519105.2">
    <molecule id="Q9NP50-1"/>
    <property type="nucleotide sequence ID" value="XM_011520803.3"/>
</dbReference>
<dbReference type="RefSeq" id="XP_016875247.1">
    <property type="nucleotide sequence ID" value="XM_017019758.1"/>
</dbReference>
<dbReference type="RefSeq" id="XP_016875248.1">
    <property type="nucleotide sequence ID" value="XM_017019759.1"/>
</dbReference>
<dbReference type="RefSeq" id="XP_016875249.1">
    <property type="nucleotide sequence ID" value="XM_017019760.1"/>
</dbReference>
<dbReference type="RefSeq" id="XP_016875250.1">
    <property type="nucleotide sequence ID" value="XM_017019761.1"/>
</dbReference>
<dbReference type="RefSeq" id="XP_016875251.1">
    <molecule id="Q9NP50-1"/>
    <property type="nucleotide sequence ID" value="XM_017019762.3"/>
</dbReference>
<dbReference type="RefSeq" id="XP_047285228.1">
    <molecule id="Q9NP50-1"/>
    <property type="nucleotide sequence ID" value="XM_047429272.1"/>
</dbReference>
<dbReference type="RefSeq" id="XP_054184907.1">
    <molecule id="Q9NP50-1"/>
    <property type="nucleotide sequence ID" value="XM_054328932.1"/>
</dbReference>
<dbReference type="RefSeq" id="XP_054184908.1">
    <molecule id="Q9NP50-1"/>
    <property type="nucleotide sequence ID" value="XM_054328933.1"/>
</dbReference>
<dbReference type="RefSeq" id="XP_054228750.1">
    <molecule id="Q9NP50-1"/>
    <property type="nucleotide sequence ID" value="XM_054372775.1"/>
</dbReference>
<dbReference type="RefSeq" id="XP_054228751.1">
    <molecule id="Q9NP50-1"/>
    <property type="nucleotide sequence ID" value="XM_054372776.1"/>
</dbReference>
<dbReference type="BioGRID" id="121842">
    <property type="interactions" value="137"/>
</dbReference>
<dbReference type="ComplexPortal" id="CPX-3323">
    <property type="entry name" value="SIN3A histone deacetylase complex, ES cell-specific variant"/>
</dbReference>
<dbReference type="FunCoup" id="Q9NP50">
    <property type="interactions" value="1727"/>
</dbReference>
<dbReference type="IntAct" id="Q9NP50">
    <property type="interactions" value="79"/>
</dbReference>
<dbReference type="MINT" id="Q9NP50"/>
<dbReference type="STRING" id="9606.ENSP00000337477"/>
<dbReference type="iPTMnet" id="Q9NP50"/>
<dbReference type="PhosphoSitePlus" id="Q9NP50"/>
<dbReference type="SwissPalm" id="Q9NP50"/>
<dbReference type="BioMuta" id="SINHCAF"/>
<dbReference type="DMDM" id="71151891"/>
<dbReference type="jPOST" id="Q9NP50"/>
<dbReference type="MassIVE" id="Q9NP50"/>
<dbReference type="PaxDb" id="9606-ENSP00000337477"/>
<dbReference type="PeptideAtlas" id="Q9NP50"/>
<dbReference type="ProteomicsDB" id="81884">
    <molecule id="Q9NP50-1"/>
</dbReference>
<dbReference type="ProteomicsDB" id="81885">
    <molecule id="Q9NP50-2"/>
</dbReference>
<dbReference type="Pumba" id="Q9NP50"/>
<dbReference type="Antibodypedia" id="24652">
    <property type="antibodies" value="42 antibodies from 12 providers"/>
</dbReference>
<dbReference type="DNASU" id="58516"/>
<dbReference type="Ensembl" id="ENST00000337682.9">
    <molecule id="Q9NP50-1"/>
    <property type="protein sequence ID" value="ENSP00000337477.4"/>
    <property type="gene ID" value="ENSG00000139146.14"/>
</dbReference>
<dbReference type="Ensembl" id="ENST00000454658.6">
    <molecule id="Q9NP50-1"/>
    <property type="protein sequence ID" value="ENSP00000393279.2"/>
    <property type="gene ID" value="ENSG00000139146.14"/>
</dbReference>
<dbReference type="Ensembl" id="ENST00000539409.5">
    <molecule id="Q9NP50-2"/>
    <property type="protein sequence ID" value="ENSP00000443697.1"/>
    <property type="gene ID" value="ENSG00000139146.14"/>
</dbReference>
<dbReference type="Ensembl" id="ENST00000542983.1">
    <molecule id="Q9NP50-2"/>
    <property type="protein sequence ID" value="ENSP00000439952.1"/>
    <property type="gene ID" value="ENSG00000139146.14"/>
</dbReference>
<dbReference type="Ensembl" id="ENST00000617411.2">
    <molecule id="Q9NP50-1"/>
    <property type="protein sequence ID" value="ENSP00000479093.1"/>
    <property type="gene ID" value="ENSG00000276371.2"/>
</dbReference>
<dbReference type="Ensembl" id="ENST00000631598.1">
    <molecule id="Q9NP50-2"/>
    <property type="protein sequence ID" value="ENSP00000488852.1"/>
    <property type="gene ID" value="ENSG00000276371.2"/>
</dbReference>
<dbReference type="Ensembl" id="ENST00000633702.1">
    <molecule id="Q9NP50-1"/>
    <property type="protein sequence ID" value="ENSP00000488570.1"/>
    <property type="gene ID" value="ENSG00000276371.2"/>
</dbReference>
<dbReference type="Ensembl" id="ENST00000633815.1">
    <molecule id="Q9NP50-2"/>
    <property type="protein sequence ID" value="ENSP00000488406.1"/>
    <property type="gene ID" value="ENSG00000276371.2"/>
</dbReference>
<dbReference type="GeneID" id="58516"/>
<dbReference type="KEGG" id="hsa:58516"/>
<dbReference type="MANE-Select" id="ENST00000337682.9">
    <property type="protein sequence ID" value="ENSP00000337477.4"/>
    <property type="RefSeq nucleotide sequence ID" value="NM_001135812.2"/>
    <property type="RefSeq protein sequence ID" value="NP_001129284.1"/>
</dbReference>
<dbReference type="UCSC" id="uc001rke.4">
    <molecule id="Q9NP50-1"/>
    <property type="organism name" value="human"/>
</dbReference>
<dbReference type="AGR" id="HGNC:30702"/>
<dbReference type="CTD" id="58516"/>
<dbReference type="DisGeNET" id="58516"/>
<dbReference type="GeneCards" id="SINHCAF"/>
<dbReference type="HGNC" id="HGNC:30702">
    <property type="gene designation" value="SINHCAF"/>
</dbReference>
<dbReference type="HPA" id="ENSG00000139146">
    <property type="expression patterns" value="Low tissue specificity"/>
</dbReference>
<dbReference type="MIM" id="615027">
    <property type="type" value="gene"/>
</dbReference>
<dbReference type="neXtProt" id="NX_Q9NP50"/>
<dbReference type="OpenTargets" id="ENSG00000139146"/>
<dbReference type="PharmGKB" id="PA134921007"/>
<dbReference type="VEuPathDB" id="HostDB:ENSG00000139146"/>
<dbReference type="eggNOG" id="ENOG502QSAG">
    <property type="taxonomic scope" value="Eukaryota"/>
</dbReference>
<dbReference type="GeneTree" id="ENSGT00390000006485"/>
<dbReference type="HOGENOM" id="CLU_2704143_0_0_1"/>
<dbReference type="InParanoid" id="Q9NP50"/>
<dbReference type="OMA" id="TPTCEEN"/>
<dbReference type="OrthoDB" id="10023333at2759"/>
<dbReference type="PAN-GO" id="Q9NP50">
    <property type="GO annotations" value="2 GO annotations based on evolutionary models"/>
</dbReference>
<dbReference type="PhylomeDB" id="Q9NP50"/>
<dbReference type="TreeFam" id="TF323911"/>
<dbReference type="PathwayCommons" id="Q9NP50"/>
<dbReference type="SignaLink" id="Q9NP50"/>
<dbReference type="BioGRID-ORCS" id="58516">
    <property type="hits" value="314 hits in 1120 CRISPR screens"/>
</dbReference>
<dbReference type="ChiTaRS" id="FAM60A">
    <property type="organism name" value="human"/>
</dbReference>
<dbReference type="GeneWiki" id="FAM60A"/>
<dbReference type="GenomeRNAi" id="58516"/>
<dbReference type="Pharos" id="Q9NP50">
    <property type="development level" value="Tdark"/>
</dbReference>
<dbReference type="PRO" id="PR:Q9NP50"/>
<dbReference type="Proteomes" id="UP000005640">
    <property type="component" value="Chromosome 12"/>
</dbReference>
<dbReference type="RNAct" id="Q9NP50">
    <property type="molecule type" value="protein"/>
</dbReference>
<dbReference type="Bgee" id="ENSG00000139146">
    <property type="expression patterns" value="Expressed in ventricular zone and 103 other cell types or tissues"/>
</dbReference>
<dbReference type="ExpressionAtlas" id="Q9NP50">
    <property type="expression patterns" value="baseline and differential"/>
</dbReference>
<dbReference type="GO" id="GO:0005634">
    <property type="term" value="C:nucleus"/>
    <property type="evidence" value="ECO:0000303"/>
    <property type="project" value="ComplexPortal"/>
</dbReference>
<dbReference type="GO" id="GO:0070822">
    <property type="term" value="C:Sin3-type complex"/>
    <property type="evidence" value="ECO:0000314"/>
    <property type="project" value="UniProtKB"/>
</dbReference>
<dbReference type="GO" id="GO:0045596">
    <property type="term" value="P:negative regulation of cell differentiation"/>
    <property type="evidence" value="ECO:0000250"/>
    <property type="project" value="UniProtKB"/>
</dbReference>
<dbReference type="GO" id="GO:0030336">
    <property type="term" value="P:negative regulation of cell migration"/>
    <property type="evidence" value="ECO:0000315"/>
    <property type="project" value="UniProtKB"/>
</dbReference>
<dbReference type="GO" id="GO:1902455">
    <property type="term" value="P:negative regulation of stem cell population maintenance"/>
    <property type="evidence" value="ECO:0000303"/>
    <property type="project" value="ComplexPortal"/>
</dbReference>
<dbReference type="GO" id="GO:0000122">
    <property type="term" value="P:negative regulation of transcription by RNA polymerase II"/>
    <property type="evidence" value="ECO:0000303"/>
    <property type="project" value="ComplexPortal"/>
</dbReference>
<dbReference type="GO" id="GO:0030512">
    <property type="term" value="P:negative regulation of transforming growth factor beta receptor signaling pathway"/>
    <property type="evidence" value="ECO:0000303"/>
    <property type="project" value="ComplexPortal"/>
</dbReference>
<dbReference type="GO" id="GO:0008284">
    <property type="term" value="P:positive regulation of cell population proliferation"/>
    <property type="evidence" value="ECO:0000250"/>
    <property type="project" value="UniProtKB"/>
</dbReference>
<dbReference type="GO" id="GO:1902459">
    <property type="term" value="P:positive regulation of stem cell population maintenance"/>
    <property type="evidence" value="ECO:0000303"/>
    <property type="project" value="ComplexPortal"/>
</dbReference>
<dbReference type="InterPro" id="IPR026065">
    <property type="entry name" value="FAM60A"/>
</dbReference>
<dbReference type="PANTHER" id="PTHR13422">
    <property type="entry name" value="SIN3-HDAC COMPLEX-ASSOCIATED FACTOR"/>
    <property type="match status" value="1"/>
</dbReference>
<dbReference type="PANTHER" id="PTHR13422:SF12">
    <property type="entry name" value="SIN3-HDAC COMPLEX-ASSOCIATED FACTOR"/>
    <property type="match status" value="1"/>
</dbReference>
<dbReference type="Pfam" id="PF15396">
    <property type="entry name" value="FAM60A"/>
    <property type="match status" value="1"/>
</dbReference>
<proteinExistence type="evidence at protein level"/>
<protein>
    <recommendedName>
        <fullName evidence="8">SIN3-HDAC complex-associated factor</fullName>
    </recommendedName>
    <alternativeName>
        <fullName>Protein FAM60A</fullName>
    </alternativeName>
    <alternativeName>
        <fullName>Tera protein homolog</fullName>
    </alternativeName>
</protein>
<comment type="function">
    <text evidence="1 4 5">Subunit of the Sin3 deacetylase complex (Sin3/HDAC), this subunit is important for the repression of genes encoding components of the TGF-beta signaling pathway (PubMed:22865885, PubMed:22984288). Core component of a SIN3A complex (composed of at least SINHCAF, SIN3A, HDAC1, SAP30, RBBP4, OGT and TET1) present in embryonic stem (ES) cells. Promotes the stability of SIN3A and its presence on chromatin and is essential for maintaining the potential of ES cells to proliferate rapidly, while ensuring a short G1-phase of the cell cycle, thereby preventing premature lineage priming (By similarity).</text>
</comment>
<comment type="subunit">
    <text evidence="1 4 5">Interacts with the Sin3/HDAC corepressor complex at least composed of BRMS1, BRMS1L, ING2, SAP30, SAP30L and HDAC1 (PubMed:22865885, PubMed:22984288). Found in a complex composed of at least SINHCAF, SIN3A, HDAC1, SAP30, RBBP4, OGT and TET1. Interacts with SIN3A and OGT (By similarity).</text>
</comment>
<comment type="interaction">
    <interactant intactId="EBI-741906">
        <id>Q9NP50</id>
    </interactant>
    <interactant intactId="EBI-301834">
        <id>Q13547</id>
        <label>HDAC1</label>
    </interactant>
    <organismsDiffer>false</organismsDiffer>
    <experiments>10</experiments>
</comment>
<comment type="interaction">
    <interactant intactId="EBI-741906">
        <id>Q9NP50</id>
    </interactant>
    <interactant intactId="EBI-12224489">
        <id>Q8N8Y5</id>
        <label>ZFP41</label>
    </interactant>
    <organismsDiffer>false</organismsDiffer>
    <experiments>3</experiments>
</comment>
<comment type="subcellular location">
    <subcellularLocation>
        <location evidence="1">Nucleus</location>
    </subcellularLocation>
</comment>
<comment type="alternative products">
    <event type="alternative splicing"/>
    <isoform>
        <id>Q9NP50-1</id>
        <name>1</name>
        <sequence type="displayed"/>
    </isoform>
    <isoform>
        <id>Q9NP50-2</id>
        <name>2</name>
        <sequence type="described" ref="VSP_014705"/>
    </isoform>
</comment>
<comment type="induction">
    <text evidence="3 4">Peaks during G1 and S phases of the cell cycle in U2OS cells. Up-regulated in squamous cell carcinoma (SCC), adenocarcinoma (AC), colon, ovary, rectum and stomach tumors.</text>
</comment>
<comment type="similarity">
    <text evidence="7">Belongs to the SINHCAF family.</text>
</comment>
<evidence type="ECO:0000250" key="1">
    <source>
        <dbReference type="UniProtKB" id="Q8C8M1"/>
    </source>
</evidence>
<evidence type="ECO:0000256" key="2">
    <source>
        <dbReference type="SAM" id="MobiDB-lite"/>
    </source>
</evidence>
<evidence type="ECO:0000269" key="3">
    <source>
    </source>
</evidence>
<evidence type="ECO:0000269" key="4">
    <source>
    </source>
</evidence>
<evidence type="ECO:0000269" key="5">
    <source>
    </source>
</evidence>
<evidence type="ECO:0000303" key="6">
    <source>
    </source>
</evidence>
<evidence type="ECO:0000305" key="7"/>
<evidence type="ECO:0000312" key="8">
    <source>
        <dbReference type="HGNC" id="HGNC:30702"/>
    </source>
</evidence>
<keyword id="KW-0025">Alternative splicing</keyword>
<keyword id="KW-0539">Nucleus</keyword>
<keyword id="KW-1267">Proteomics identification</keyword>
<keyword id="KW-1185">Reference proteome</keyword>
<organism>
    <name type="scientific">Homo sapiens</name>
    <name type="common">Human</name>
    <dbReference type="NCBI Taxonomy" id="9606"/>
    <lineage>
        <taxon>Eukaryota</taxon>
        <taxon>Metazoa</taxon>
        <taxon>Chordata</taxon>
        <taxon>Craniata</taxon>
        <taxon>Vertebrata</taxon>
        <taxon>Euteleostomi</taxon>
        <taxon>Mammalia</taxon>
        <taxon>Eutheria</taxon>
        <taxon>Euarchontoglires</taxon>
        <taxon>Primates</taxon>
        <taxon>Haplorrhini</taxon>
        <taxon>Catarrhini</taxon>
        <taxon>Hominidae</taxon>
        <taxon>Homo</taxon>
    </lineage>
</organism>
<name>SHCAF_HUMAN</name>